<protein>
    <recommendedName>
        <fullName evidence="1">Ell-associated factor Eaf</fullName>
    </recommendedName>
</protein>
<proteinExistence type="inferred from homology"/>
<keyword id="KW-0010">Activator</keyword>
<keyword id="KW-0217">Developmental protein</keyword>
<keyword id="KW-0539">Nucleus</keyword>
<keyword id="KW-0597">Phosphoprotein</keyword>
<keyword id="KW-1185">Reference proteome</keyword>
<keyword id="KW-0804">Transcription</keyword>
<keyword id="KW-0805">Transcription regulation</keyword>
<feature type="chain" id="PRO_0000386603" description="Ell-associated factor Eaf">
    <location>
        <begin position="1"/>
        <end position="564"/>
    </location>
</feature>
<feature type="region of interest" description="Disordered" evidence="4">
    <location>
        <begin position="179"/>
        <end position="255"/>
    </location>
</feature>
<feature type="region of interest" description="Disordered" evidence="4">
    <location>
        <begin position="270"/>
        <end position="564"/>
    </location>
</feature>
<feature type="compositionally biased region" description="Polar residues" evidence="4">
    <location>
        <begin position="186"/>
        <end position="205"/>
    </location>
</feature>
<feature type="compositionally biased region" description="Low complexity" evidence="4">
    <location>
        <begin position="274"/>
        <end position="283"/>
    </location>
</feature>
<feature type="compositionally biased region" description="Basic residues" evidence="4">
    <location>
        <begin position="297"/>
        <end position="309"/>
    </location>
</feature>
<feature type="compositionally biased region" description="Low complexity" evidence="4">
    <location>
        <begin position="315"/>
        <end position="329"/>
    </location>
</feature>
<feature type="compositionally biased region" description="Low complexity" evidence="4">
    <location>
        <begin position="343"/>
        <end position="387"/>
    </location>
</feature>
<feature type="compositionally biased region" description="Low complexity" evidence="4">
    <location>
        <begin position="409"/>
        <end position="420"/>
    </location>
</feature>
<feature type="compositionally biased region" description="Acidic residues" evidence="4">
    <location>
        <begin position="438"/>
        <end position="453"/>
    </location>
</feature>
<feature type="compositionally biased region" description="Low complexity" evidence="4">
    <location>
        <begin position="463"/>
        <end position="505"/>
    </location>
</feature>
<feature type="compositionally biased region" description="Low complexity" evidence="4">
    <location>
        <begin position="523"/>
        <end position="533"/>
    </location>
</feature>
<feature type="compositionally biased region" description="Low complexity" evidence="4">
    <location>
        <begin position="546"/>
        <end position="564"/>
    </location>
</feature>
<feature type="modified residue" description="Phosphoserine" evidence="1">
    <location>
        <position position="215"/>
    </location>
</feature>
<dbReference type="EMBL" id="CM000071">
    <property type="protein sequence ID" value="EDY68749.1"/>
    <property type="status" value="ALT_SEQ"/>
    <property type="molecule type" value="Genomic_DNA"/>
</dbReference>
<dbReference type="SMR" id="B5E1I4"/>
<dbReference type="FunCoup" id="B5E1I4">
    <property type="interactions" value="375"/>
</dbReference>
<dbReference type="STRING" id="46245.B5E1I4"/>
<dbReference type="eggNOG" id="KOG4795">
    <property type="taxonomic scope" value="Eukaryota"/>
</dbReference>
<dbReference type="InParanoid" id="B5E1I4"/>
<dbReference type="Proteomes" id="UP000001819">
    <property type="component" value="Unplaced"/>
</dbReference>
<dbReference type="GO" id="GO:0005654">
    <property type="term" value="C:nucleoplasm"/>
    <property type="evidence" value="ECO:0000250"/>
    <property type="project" value="UniProtKB"/>
</dbReference>
<dbReference type="GO" id="GO:0032783">
    <property type="term" value="C:super elongation complex"/>
    <property type="evidence" value="ECO:0007669"/>
    <property type="project" value="InterPro"/>
</dbReference>
<dbReference type="GO" id="GO:0003711">
    <property type="term" value="F:transcription elongation factor activity"/>
    <property type="evidence" value="ECO:0007669"/>
    <property type="project" value="TreeGrafter"/>
</dbReference>
<dbReference type="GO" id="GO:0045893">
    <property type="term" value="P:positive regulation of DNA-templated transcription"/>
    <property type="evidence" value="ECO:0000250"/>
    <property type="project" value="UniProtKB"/>
</dbReference>
<dbReference type="GO" id="GO:0006368">
    <property type="term" value="P:transcription elongation by RNA polymerase II"/>
    <property type="evidence" value="ECO:0007669"/>
    <property type="project" value="InterPro"/>
</dbReference>
<dbReference type="InterPro" id="IPR027093">
    <property type="entry name" value="EAF_fam"/>
</dbReference>
<dbReference type="InterPro" id="IPR019194">
    <property type="entry name" value="Tscrpt_elong_fac_Eaf_N"/>
</dbReference>
<dbReference type="PANTHER" id="PTHR15970">
    <property type="entry name" value="ELL-ASSOCIATED FACTOR EAF"/>
    <property type="match status" value="1"/>
</dbReference>
<dbReference type="PANTHER" id="PTHR15970:SF2">
    <property type="entry name" value="ELL-ASSOCIATED FACTOR EAF"/>
    <property type="match status" value="1"/>
</dbReference>
<dbReference type="Pfam" id="PF09816">
    <property type="entry name" value="EAF"/>
    <property type="match status" value="1"/>
</dbReference>
<name>EAF_DROPS</name>
<evidence type="ECO:0000250" key="1">
    <source>
        <dbReference type="UniProtKB" id="Q7JRJ1"/>
    </source>
</evidence>
<evidence type="ECO:0000250" key="2">
    <source>
        <dbReference type="UniProtKB" id="Q96JC9"/>
    </source>
</evidence>
<evidence type="ECO:0000255" key="3"/>
<evidence type="ECO:0000256" key="4">
    <source>
        <dbReference type="SAM" id="MobiDB-lite"/>
    </source>
</evidence>
<evidence type="ECO:0000305" key="5"/>
<evidence type="ECO:0000312" key="6">
    <source>
        <dbReference type="EMBL" id="EDY68749.1"/>
    </source>
</evidence>
<reference evidence="6" key="1">
    <citation type="journal article" date="2005" name="Genome Res.">
        <title>Comparative genome sequencing of Drosophila pseudoobscura: chromosomal, gene, and cis-element evolution.</title>
        <authorList>
            <person name="Richards S."/>
            <person name="Liu Y."/>
            <person name="Bettencourt B.R."/>
            <person name="Hradecky P."/>
            <person name="Letovsky S."/>
            <person name="Nielsen R."/>
            <person name="Thornton K."/>
            <person name="Hubisz M.J."/>
            <person name="Chen R."/>
            <person name="Meisel R.P."/>
            <person name="Couronne O."/>
            <person name="Hua S."/>
            <person name="Smith M.A."/>
            <person name="Zhang P."/>
            <person name="Liu J."/>
            <person name="Bussemaker H.J."/>
            <person name="van Batenburg M.F."/>
            <person name="Howells S.L."/>
            <person name="Scherer S.E."/>
            <person name="Sodergren E."/>
            <person name="Matthews B.B."/>
            <person name="Crosby M.A."/>
            <person name="Schroeder A.J."/>
            <person name="Ortiz-Barrientos D."/>
            <person name="Rives C.M."/>
            <person name="Metzker M.L."/>
            <person name="Muzny D.M."/>
            <person name="Scott G."/>
            <person name="Steffen D."/>
            <person name="Wheeler D.A."/>
            <person name="Worley K.C."/>
            <person name="Havlak P."/>
            <person name="Durbin K.J."/>
            <person name="Egan A."/>
            <person name="Gill R."/>
            <person name="Hume J."/>
            <person name="Morgan M.B."/>
            <person name="Miner G."/>
            <person name="Hamilton C."/>
            <person name="Huang Y."/>
            <person name="Waldron L."/>
            <person name="Verduzco D."/>
            <person name="Clerc-Blankenburg K.P."/>
            <person name="Dubchak I."/>
            <person name="Noor M.A.F."/>
            <person name="Anderson W."/>
            <person name="White K.P."/>
            <person name="Clark A.G."/>
            <person name="Schaeffer S.W."/>
            <person name="Gelbart W.M."/>
            <person name="Weinstock G.M."/>
            <person name="Gibbs R.A."/>
        </authorList>
    </citation>
    <scope>NUCLEOTIDE SEQUENCE [LARGE SCALE GENOMIC DNA]</scope>
    <source>
        <strain>MV2-25 / Tucson 14011-0121.94</strain>
    </source>
</reference>
<accession>B5E1I4</accession>
<gene>
    <name evidence="1" type="primary">Eaf</name>
    <name type="ORF">GA24539</name>
</gene>
<comment type="function">
    <text evidence="1">Promotes transcriptional elongation by Su(Tpl)/ELL. Essential for development (By similarity).</text>
</comment>
<comment type="subcellular location">
    <subcellularLocation>
        <location evidence="2">Nucleus</location>
    </subcellularLocation>
</comment>
<comment type="similarity">
    <text evidence="3">Belongs to the EAF family.</text>
</comment>
<comment type="sequence caution" evidence="5">
    <conflict type="erroneous gene model prediction">
        <sequence resource="EMBL-CDS" id="EDY68749"/>
    </conflict>
</comment>
<sequence length="564" mass="62340">MMMTKQKNTLAERLNIGDEVRELKLGSTFNPKNTSTAFHTIKYDFKPASVDTSRMATVDVGSNNQVTVIVPNSELALNVRLLIFGLTESSGVPHTVYKGNQREYAKECLMIYDKETGAITIEKLNHNIQVKKTRTEVTNKPVQLPAQSVPMNMGHQGQVLGTNGSVPPPMAQLAQGPLSGPGGKLENSTMRVSSKTKVSTGSRRNNIIDFKPRNSPMQQSSPSRPVVTHRSPQSAPAWDANNAQQTLPSIPMITDDDDFGLRAALHNGGQANISGSSTGSSSGQPDLYGSSSSSHMGKQRQAHGKRQQIHQRSSPPVQQQPHYQQQQQPNYGRAYNGASNYAQQQQPQPQQQRHSPHQQPHQQQHQRHSPQQQQQRHSPQQLQQQRPTSYGHSNNMPMDLDSSREHDLASQSVAQAAAVLEQQIGGALSASSSSSESDSSDSDSGSDSDDSTEDDRSMKEQQEQQQQQQLQHQQLQLQHQQIQQPAPHHQRHQQQQSQQHMNQLPNLGLGSISPSYNNHHNHQQPQPQPQQQQMSGVYASNGGFPNDLLQNDLQLSSNSSDDDD</sequence>
<organism>
    <name type="scientific">Drosophila pseudoobscura pseudoobscura</name>
    <name type="common">Fruit fly</name>
    <dbReference type="NCBI Taxonomy" id="46245"/>
    <lineage>
        <taxon>Eukaryota</taxon>
        <taxon>Metazoa</taxon>
        <taxon>Ecdysozoa</taxon>
        <taxon>Arthropoda</taxon>
        <taxon>Hexapoda</taxon>
        <taxon>Insecta</taxon>
        <taxon>Pterygota</taxon>
        <taxon>Neoptera</taxon>
        <taxon>Endopterygota</taxon>
        <taxon>Diptera</taxon>
        <taxon>Brachycera</taxon>
        <taxon>Muscomorpha</taxon>
        <taxon>Ephydroidea</taxon>
        <taxon>Drosophilidae</taxon>
        <taxon>Drosophila</taxon>
        <taxon>Sophophora</taxon>
    </lineage>
</organism>